<protein>
    <recommendedName>
        <fullName>U14-ctenitoxin-Co1a</fullName>
        <shortName>U14-CNTX-Co1a</shortName>
    </recommendedName>
    <alternativeName>
        <fullName>Neurotoxin Oc M20-3</fullName>
    </alternativeName>
</protein>
<evidence type="ECO:0000250" key="1"/>
<evidence type="ECO:0000250" key="2">
    <source>
        <dbReference type="UniProtKB" id="P81790"/>
    </source>
</evidence>
<evidence type="ECO:0000269" key="3">
    <source ref="1"/>
</evidence>
<evidence type="ECO:0000305" key="4"/>
<reference evidence="4" key="1">
    <citation type="submission" date="2007-07" db="UniProtKB">
        <authorList>
            <person name="Borges M.H."/>
            <person name="Oliveira C.F.B."/>
            <person name="Goncalves J.M."/>
            <person name="Rates B."/>
            <person name="Santos D.M."/>
            <person name="Pimenta A.M.C."/>
            <person name="Cordeiro M.N."/>
            <person name="Richardson M."/>
        </authorList>
    </citation>
    <scope>PROTEIN SEQUENCE</scope>
    <scope>SUBCELLULAR LOCATION</scope>
    <scope>TISSUE SPECIFICITY</scope>
    <scope>MASS SPECTROMETRY</scope>
    <source>
        <tissue>Venom</tissue>
    </source>
</reference>
<organism>
    <name type="scientific">Ctenus ornatus</name>
    <name type="common">Brazilian spider</name>
    <name type="synonym">Oligoctenus ornatus</name>
    <dbReference type="NCBI Taxonomy" id="406443"/>
    <lineage>
        <taxon>Eukaryota</taxon>
        <taxon>Metazoa</taxon>
        <taxon>Ecdysozoa</taxon>
        <taxon>Arthropoda</taxon>
        <taxon>Chelicerata</taxon>
        <taxon>Arachnida</taxon>
        <taxon>Araneae</taxon>
        <taxon>Araneomorphae</taxon>
        <taxon>Entelegynae</taxon>
        <taxon>Lycosoidea</taxon>
        <taxon>Ctenidae</taxon>
        <taxon>Oligoctenus</taxon>
    </lineage>
</organism>
<comment type="function">
    <text evidence="1">Omega-agatoxins are antagonists of voltage-gated calcium channels (Cav).</text>
</comment>
<comment type="subcellular location">
    <subcellularLocation>
        <location evidence="3">Secreted</location>
    </subcellularLocation>
</comment>
<comment type="tissue specificity">
    <text evidence="3">Expressed by the venom gland.</text>
</comment>
<comment type="PTM">
    <text evidence="2">Disulfide bonds are present.</text>
</comment>
<comment type="mass spectrometry" mass="8032.9" error="0.24" method="Electrospray" evidence="3"/>
<comment type="similarity">
    <text evidence="4">Belongs to the neurotoxin 04 (omega-agtx) family. 03 (type II/III omega-agtx) subfamily.</text>
</comment>
<accession>P85273</accession>
<keyword id="KW-0108">Calcium channel impairing toxin</keyword>
<keyword id="KW-0903">Direct protein sequencing</keyword>
<keyword id="KW-1015">Disulfide bond</keyword>
<keyword id="KW-0872">Ion channel impairing toxin</keyword>
<keyword id="KW-0528">Neurotoxin</keyword>
<keyword id="KW-0964">Secreted</keyword>
<keyword id="KW-0800">Toxin</keyword>
<keyword id="KW-1218">Voltage-gated calcium channel impairing toxin</keyword>
<proteinExistence type="evidence at protein level"/>
<sequence length="31" mass="3414">GNCLELGEYCDGSKDDCQCCRDNAYCGCDIF</sequence>
<feature type="chain" id="PRO_0000302125" description="U14-ctenitoxin-Co1a">
    <location>
        <begin position="1"/>
        <end position="31" status="greater than"/>
    </location>
</feature>
<feature type="non-terminal residue">
    <location>
        <position position="31"/>
    </location>
</feature>
<name>TXM20_CTEON</name>
<dbReference type="SMR" id="P85273"/>
<dbReference type="ArachnoServer" id="AS000371">
    <property type="toxin name" value="U14-ctenitoxin-Co1a"/>
</dbReference>
<dbReference type="GO" id="GO:0005576">
    <property type="term" value="C:extracellular region"/>
    <property type="evidence" value="ECO:0007669"/>
    <property type="project" value="UniProtKB-SubCell"/>
</dbReference>
<dbReference type="GO" id="GO:0005246">
    <property type="term" value="F:calcium channel regulator activity"/>
    <property type="evidence" value="ECO:0007669"/>
    <property type="project" value="UniProtKB-KW"/>
</dbReference>
<dbReference type="GO" id="GO:0090729">
    <property type="term" value="F:toxin activity"/>
    <property type="evidence" value="ECO:0007669"/>
    <property type="project" value="UniProtKB-KW"/>
</dbReference>
<dbReference type="InterPro" id="IPR013605">
    <property type="entry name" value="Toxin_34"/>
</dbReference>
<dbReference type="Pfam" id="PF08396">
    <property type="entry name" value="Toxin_34"/>
    <property type="match status" value="1"/>
</dbReference>